<accession>P19576</accession>
<organism>
    <name type="scientific">Salmonella typhimurium (strain LT2 / SGSC1412 / ATCC 700720)</name>
    <dbReference type="NCBI Taxonomy" id="99287"/>
    <lineage>
        <taxon>Bacteria</taxon>
        <taxon>Pseudomonadati</taxon>
        <taxon>Pseudomonadota</taxon>
        <taxon>Gammaproteobacteria</taxon>
        <taxon>Enterobacterales</taxon>
        <taxon>Enterobacteriaceae</taxon>
        <taxon>Salmonella</taxon>
    </lineage>
</organism>
<name>MALE_SALTY</name>
<comment type="function">
    <text evidence="1">Part of the ABC transporter complex MalEFGK involved in maltose/maltodextrin import. Binds maltose and higher maltodextrins.</text>
</comment>
<comment type="subunit">
    <text evidence="1">The complex is composed of two ATP-binding proteins (MalK), two transmembrane proteins (MalG and MalF) and a solute-binding protein (MalE).</text>
</comment>
<comment type="subcellular location">
    <subcellularLocation>
        <location evidence="1">Periplasm</location>
    </subcellularLocation>
</comment>
<comment type="similarity">
    <text evidence="2">Belongs to the bacterial solute-binding protein 1 family.</text>
</comment>
<comment type="sequence caution" evidence="2">
    <conflict type="erroneous initiation">
        <sequence resource="EMBL-CDS" id="AAL23053"/>
    </conflict>
    <text>Extended N-terminus.</text>
</comment>
<gene>
    <name type="primary">malE</name>
    <name type="ordered locus">STM4229</name>
</gene>
<keyword id="KW-0002">3D-structure</keyword>
<keyword id="KW-0574">Periplasm</keyword>
<keyword id="KW-1185">Reference proteome</keyword>
<keyword id="KW-0732">Signal</keyword>
<keyword id="KW-0762">Sugar transport</keyword>
<keyword id="KW-0813">Transport</keyword>
<protein>
    <recommendedName>
        <fullName evidence="1">Maltose/maltodextrin-binding periplasmic protein</fullName>
    </recommendedName>
    <alternativeName>
        <fullName evidence="1">MMBP</fullName>
    </alternativeName>
    <alternativeName>
        <fullName evidence="1">Maltodextrin-binding protein</fullName>
    </alternativeName>
    <alternativeName>
        <fullName evidence="1">Maltose-binding protein</fullName>
        <shortName evidence="1">MBP</shortName>
    </alternativeName>
</protein>
<proteinExistence type="evidence at protein level"/>
<sequence length="396" mass="43181">MKIKTGVGILALSALTTMMISAPALAKIEEGKLVIWINGDKGYNGLAEVGKKFEQDTGIKVTVEHPDKLEEKFPQVAATGDGPDIIFWAHDRFGGYAQSGLLAEVTPDKAFQDKLYPFTWDAVRYNGKLIAYPIAVEALSLIYNKDLVPNPPKTWEEIPALDKELKVKGKSAIMFNLQEPYFTWPLIAADGGYAFKFENGKYDVKDVGVDNAGAKAGLTFLIDMIKNKNMSADTDYSIAEAAFNKGETAMTINGPWAWSNIDKSKVNYGVTLLPTFKGKPSKPFVGVLSAGINAASPNKELAKEFLENYLLTDQGLEAVNKDKPLGAVALKSFQEQLAKDPRIAATMDNAQKGEIMPNIPQMSAFWYAVRTAVINAASGRQTVDAALKDAQSRITK</sequence>
<evidence type="ECO:0000250" key="1">
    <source>
        <dbReference type="UniProtKB" id="P0AEX9"/>
    </source>
</evidence>
<evidence type="ECO:0000305" key="2"/>
<evidence type="ECO:0007829" key="3">
    <source>
        <dbReference type="PDB" id="3JYR"/>
    </source>
</evidence>
<evidence type="ECO:0007829" key="4">
    <source>
        <dbReference type="PDB" id="6L0Z"/>
    </source>
</evidence>
<dbReference type="EMBL" id="X54292">
    <property type="protein sequence ID" value="CAA38189.1"/>
    <property type="molecule type" value="Genomic_DNA"/>
</dbReference>
<dbReference type="EMBL" id="AE006468">
    <property type="protein sequence ID" value="AAL23053.1"/>
    <property type="status" value="ALT_INIT"/>
    <property type="molecule type" value="Genomic_DNA"/>
</dbReference>
<dbReference type="PIR" id="S05331">
    <property type="entry name" value="S05331"/>
</dbReference>
<dbReference type="RefSeq" id="NP_463094.3">
    <property type="nucleotide sequence ID" value="NC_003197.2"/>
</dbReference>
<dbReference type="RefSeq" id="WP_014343935.1">
    <property type="nucleotide sequence ID" value="NC_003197.2"/>
</dbReference>
<dbReference type="PDB" id="3JYR">
    <property type="method" value="X-ray"/>
    <property type="resolution" value="1.75 A"/>
    <property type="chains" value="A=1-396"/>
</dbReference>
<dbReference type="PDB" id="6L0Z">
    <property type="method" value="X-ray"/>
    <property type="resolution" value="1.60 A"/>
    <property type="chains" value="A=27-396"/>
</dbReference>
<dbReference type="PDB" id="6L3E">
    <property type="method" value="X-ray"/>
    <property type="resolution" value="1.60 A"/>
    <property type="chains" value="A=27-396"/>
</dbReference>
<dbReference type="PDB" id="7FFT">
    <property type="method" value="X-ray"/>
    <property type="resolution" value="1.60 A"/>
    <property type="chains" value="A=27-396"/>
</dbReference>
<dbReference type="PDB" id="7FFW">
    <property type="method" value="X-ray"/>
    <property type="resolution" value="1.60 A"/>
    <property type="chains" value="A=27-396"/>
</dbReference>
<dbReference type="PDBsum" id="3JYR"/>
<dbReference type="PDBsum" id="6L0Z"/>
<dbReference type="PDBsum" id="6L3E"/>
<dbReference type="PDBsum" id="7FFT"/>
<dbReference type="PDBsum" id="7FFW"/>
<dbReference type="SMR" id="P19576"/>
<dbReference type="IntAct" id="P19576">
    <property type="interactions" value="2"/>
</dbReference>
<dbReference type="STRING" id="99287.STM4229"/>
<dbReference type="PaxDb" id="99287-STM4229"/>
<dbReference type="GeneID" id="1255755"/>
<dbReference type="KEGG" id="stm:STM4229"/>
<dbReference type="PATRIC" id="fig|99287.12.peg.4449"/>
<dbReference type="HOGENOM" id="CLU_031285_17_0_6"/>
<dbReference type="PhylomeDB" id="P19576"/>
<dbReference type="EvolutionaryTrace" id="P19576"/>
<dbReference type="PRO" id="PR:P19576"/>
<dbReference type="Proteomes" id="UP000001014">
    <property type="component" value="Chromosome"/>
</dbReference>
<dbReference type="GO" id="GO:0055052">
    <property type="term" value="C:ATP-binding cassette (ABC) transporter complex, substrate-binding subunit-containing"/>
    <property type="evidence" value="ECO:0000318"/>
    <property type="project" value="GO_Central"/>
</dbReference>
<dbReference type="GO" id="GO:0030288">
    <property type="term" value="C:outer membrane-bounded periplasmic space"/>
    <property type="evidence" value="ECO:0007669"/>
    <property type="project" value="UniProtKB-ARBA"/>
</dbReference>
<dbReference type="GO" id="GO:0015144">
    <property type="term" value="F:carbohydrate transmembrane transporter activity"/>
    <property type="evidence" value="ECO:0007669"/>
    <property type="project" value="InterPro"/>
</dbReference>
<dbReference type="GO" id="GO:1901982">
    <property type="term" value="F:maltose binding"/>
    <property type="evidence" value="ECO:0000318"/>
    <property type="project" value="GO_Central"/>
</dbReference>
<dbReference type="GO" id="GO:0042956">
    <property type="term" value="P:maltodextrin transmembrane transport"/>
    <property type="evidence" value="ECO:0000318"/>
    <property type="project" value="GO_Central"/>
</dbReference>
<dbReference type="GO" id="GO:0015768">
    <property type="term" value="P:maltose transport"/>
    <property type="evidence" value="ECO:0000318"/>
    <property type="project" value="GO_Central"/>
</dbReference>
<dbReference type="CDD" id="cd13656">
    <property type="entry name" value="PBP2_MBP"/>
    <property type="match status" value="1"/>
</dbReference>
<dbReference type="Gene3D" id="3.40.190.10">
    <property type="entry name" value="Periplasmic binding protein-like II"/>
    <property type="match status" value="2"/>
</dbReference>
<dbReference type="InterPro" id="IPR006060">
    <property type="entry name" value="Maltose/Cyclodextrin-bd"/>
</dbReference>
<dbReference type="InterPro" id="IPR006059">
    <property type="entry name" value="SBP"/>
</dbReference>
<dbReference type="InterPro" id="IPR006061">
    <property type="entry name" value="SBP_1_CS"/>
</dbReference>
<dbReference type="NCBIfam" id="NF007011">
    <property type="entry name" value="PRK09474.1"/>
    <property type="match status" value="1"/>
</dbReference>
<dbReference type="PANTHER" id="PTHR30061">
    <property type="entry name" value="MALTOSE-BINDING PERIPLASMIC PROTEIN"/>
    <property type="match status" value="1"/>
</dbReference>
<dbReference type="PANTHER" id="PTHR30061:SF50">
    <property type="entry name" value="MALTOSE_MALTODEXTRIN-BINDING PERIPLASMIC PROTEIN"/>
    <property type="match status" value="1"/>
</dbReference>
<dbReference type="Pfam" id="PF01547">
    <property type="entry name" value="SBP_bac_1"/>
    <property type="match status" value="1"/>
</dbReference>
<dbReference type="PRINTS" id="PR00181">
    <property type="entry name" value="MALTOSEBP"/>
</dbReference>
<dbReference type="SUPFAM" id="SSF53850">
    <property type="entry name" value="Periplasmic binding protein-like II"/>
    <property type="match status" value="1"/>
</dbReference>
<dbReference type="PROSITE" id="PS01037">
    <property type="entry name" value="SBP_BACTERIAL_1"/>
    <property type="match status" value="1"/>
</dbReference>
<feature type="signal peptide">
    <location>
        <begin position="1"/>
        <end position="26"/>
    </location>
</feature>
<feature type="chain" id="PRO_0000031697" description="Maltose/maltodextrin-binding periplasmic protein">
    <location>
        <begin position="27"/>
        <end position="396"/>
    </location>
</feature>
<feature type="sequence conflict" description="In Ref. 1; CAA38189 and 2." evidence="2" ref="1 2">
    <original>KL</original>
    <variation>NV</variation>
    <location>
        <begin position="128"/>
        <end position="129"/>
    </location>
</feature>
<feature type="strand" evidence="4">
    <location>
        <begin position="32"/>
        <end position="36"/>
    </location>
</feature>
<feature type="helix" evidence="4">
    <location>
        <begin position="43"/>
        <end position="57"/>
    </location>
</feature>
<feature type="strand" evidence="4">
    <location>
        <begin position="61"/>
        <end position="64"/>
    </location>
</feature>
<feature type="helix" evidence="4">
    <location>
        <begin position="69"/>
        <end position="77"/>
    </location>
</feature>
<feature type="turn" evidence="4">
    <location>
        <begin position="78"/>
        <end position="80"/>
    </location>
</feature>
<feature type="strand" evidence="4">
    <location>
        <begin position="84"/>
        <end position="89"/>
    </location>
</feature>
<feature type="helix" evidence="4">
    <location>
        <begin position="90"/>
        <end position="92"/>
    </location>
</feature>
<feature type="helix" evidence="4">
    <location>
        <begin position="93"/>
        <end position="98"/>
    </location>
</feature>
<feature type="helix" evidence="4">
    <location>
        <begin position="109"/>
        <end position="112"/>
    </location>
</feature>
<feature type="helix" evidence="4">
    <location>
        <begin position="117"/>
        <end position="122"/>
    </location>
</feature>
<feature type="strand" evidence="4">
    <location>
        <begin position="131"/>
        <end position="137"/>
    </location>
</feature>
<feature type="strand" evidence="4">
    <location>
        <begin position="140"/>
        <end position="144"/>
    </location>
</feature>
<feature type="turn" evidence="4">
    <location>
        <begin position="145"/>
        <end position="147"/>
    </location>
</feature>
<feature type="strand" evidence="4">
    <location>
        <begin position="153"/>
        <end position="155"/>
    </location>
</feature>
<feature type="helix" evidence="4">
    <location>
        <begin position="158"/>
        <end position="167"/>
    </location>
</feature>
<feature type="strand" evidence="4">
    <location>
        <begin position="171"/>
        <end position="173"/>
    </location>
</feature>
<feature type="strand" evidence="3">
    <location>
        <begin position="177"/>
        <end position="179"/>
    </location>
</feature>
<feature type="helix" evidence="4">
    <location>
        <begin position="180"/>
        <end position="189"/>
    </location>
</feature>
<feature type="strand" evidence="4">
    <location>
        <begin position="193"/>
        <end position="197"/>
    </location>
</feature>
<feature type="strand" evidence="4">
    <location>
        <begin position="202"/>
        <end position="211"/>
    </location>
</feature>
<feature type="helix" evidence="4">
    <location>
        <begin position="212"/>
        <end position="226"/>
    </location>
</feature>
<feature type="helix" evidence="4">
    <location>
        <begin position="236"/>
        <end position="244"/>
    </location>
</feature>
<feature type="strand" evidence="4">
    <location>
        <begin position="247"/>
        <end position="253"/>
    </location>
</feature>
<feature type="helix" evidence="4">
    <location>
        <begin position="255"/>
        <end position="257"/>
    </location>
</feature>
<feature type="helix" evidence="4">
    <location>
        <begin position="258"/>
        <end position="263"/>
    </location>
</feature>
<feature type="strand" evidence="4">
    <location>
        <begin position="268"/>
        <end position="271"/>
    </location>
</feature>
<feature type="strand" evidence="4">
    <location>
        <begin position="284"/>
        <end position="293"/>
    </location>
</feature>
<feature type="helix" evidence="4">
    <location>
        <begin position="299"/>
        <end position="308"/>
    </location>
</feature>
<feature type="turn" evidence="4">
    <location>
        <begin position="309"/>
        <end position="311"/>
    </location>
</feature>
<feature type="helix" evidence="4">
    <location>
        <begin position="313"/>
        <end position="322"/>
    </location>
</feature>
<feature type="strand" evidence="4">
    <location>
        <begin position="327"/>
        <end position="330"/>
    </location>
</feature>
<feature type="helix" evidence="4">
    <location>
        <begin position="331"/>
        <end position="337"/>
    </location>
</feature>
<feature type="helix" evidence="4">
    <location>
        <begin position="341"/>
        <end position="352"/>
    </location>
</feature>
<feature type="strand" evidence="4">
    <location>
        <begin position="353"/>
        <end position="355"/>
    </location>
</feature>
<feature type="helix" evidence="4">
    <location>
        <begin position="362"/>
        <end position="377"/>
    </location>
</feature>
<feature type="helix" evidence="4">
    <location>
        <begin position="383"/>
        <end position="394"/>
    </location>
</feature>
<reference key="1">
    <citation type="journal article" date="1989" name="Mol. Gen. Genet.">
        <title>Comparison of sequences from the malB regions of Salmonella typhimurium and Enterobacter aerogenes with Escherichia coli K12: a potential new regulatory site in the interoperonic region.</title>
        <authorList>
            <person name="Dahl M.K."/>
            <person name="Francoz E."/>
            <person name="Saurin W."/>
            <person name="Boos W."/>
            <person name="Manson M.D."/>
            <person name="Hofnung M."/>
        </authorList>
    </citation>
    <scope>NUCLEOTIDE SEQUENCE [GENOMIC DNA]</scope>
    <source>
        <strain>LT2</strain>
    </source>
</reference>
<reference key="2">
    <citation type="journal article" date="1992" name="Biochim. Biophys. Acta">
        <title>Completion of the nucleotide sequence of the 'maltose B' region in Salmonella typhimurium: the high conservation of the malM gene suggests a selected physiological role for its product.</title>
        <authorList>
            <person name="Schneider E."/>
            <person name="Francoz E."/>
            <person name="Dassa E."/>
        </authorList>
    </citation>
    <scope>NUCLEOTIDE SEQUENCE [GENOMIC DNA]</scope>
    <source>
        <strain>LT2</strain>
    </source>
</reference>
<reference key="3">
    <citation type="journal article" date="2001" name="Nature">
        <title>Complete genome sequence of Salmonella enterica serovar Typhimurium LT2.</title>
        <authorList>
            <person name="McClelland M."/>
            <person name="Sanderson K.E."/>
            <person name="Spieth J."/>
            <person name="Clifton S.W."/>
            <person name="Latreille P."/>
            <person name="Courtney L."/>
            <person name="Porwollik S."/>
            <person name="Ali J."/>
            <person name="Dante M."/>
            <person name="Du F."/>
            <person name="Hou S."/>
            <person name="Layman D."/>
            <person name="Leonard S."/>
            <person name="Nguyen C."/>
            <person name="Scott K."/>
            <person name="Holmes A."/>
            <person name="Grewal N."/>
            <person name="Mulvaney E."/>
            <person name="Ryan E."/>
            <person name="Sun H."/>
            <person name="Florea L."/>
            <person name="Miller W."/>
            <person name="Stoneking T."/>
            <person name="Nhan M."/>
            <person name="Waterston R."/>
            <person name="Wilson R.K."/>
        </authorList>
    </citation>
    <scope>NUCLEOTIDE SEQUENCE [LARGE SCALE GENOMIC DNA]</scope>
    <source>
        <strain>LT2 / SGSC1412 / ATCC 700720</strain>
    </source>
</reference>